<organism>
    <name type="scientific">Mus musculus</name>
    <name type="common">Mouse</name>
    <dbReference type="NCBI Taxonomy" id="10090"/>
    <lineage>
        <taxon>Eukaryota</taxon>
        <taxon>Metazoa</taxon>
        <taxon>Chordata</taxon>
        <taxon>Craniata</taxon>
        <taxon>Vertebrata</taxon>
        <taxon>Euteleostomi</taxon>
        <taxon>Mammalia</taxon>
        <taxon>Eutheria</taxon>
        <taxon>Euarchontoglires</taxon>
        <taxon>Glires</taxon>
        <taxon>Rodentia</taxon>
        <taxon>Myomorpha</taxon>
        <taxon>Muroidea</taxon>
        <taxon>Muridae</taxon>
        <taxon>Murinae</taxon>
        <taxon>Mus</taxon>
        <taxon>Mus</taxon>
    </lineage>
</organism>
<accession>Q8BZ00</accession>
<accession>Q3U0X0</accession>
<sequence length="644" mass="72133">MAGQLRFTSGKDEDHFQHQGAVELLAFNFLLILTILTIWLFKNHRFRFLHETGGAMVYGLIMGLILRYATAPTDIDSGTVYNCGNLFFSPSTLLVNITDQVYEYKYQREINQHNISPHQGNAILEKMTFDPEIFFNVLLPPIIFHAGYSLKKRHFFQNLGSILTYAFLGTAISCVVIGLIMYGFVKAMVHAGQLKSGDFHFTDCLFFGSLMSATDPVTVLAIFHELHVDPDLYTLLFGESVLNDAVAIVLTYSISIYSPKENPNAFDTAAFFQSVGNFLGIFAGSFAMGSAYAVVTALLTKFTKLREFPMLETGLFFLLSWSAFLSAEAAGLTGIVAVLFCGVTQAHYTYNNLSSDSKLRTKQLFEFMNFLAENVIFCYMGLALFTFQNHIFNALFILGAFLAIFVARACNIYPLSFLLNLGRKQKIPWNFQHMMMFSGLRGAIAFALAIRNTESQPKQMMFTTTLLLVFFTVWVFGGGTTPMLTWLQIRVGVDLDESLKEEPSSQQEANKLDKNMTKTESAQLFRMWYGFDHKYLKPILTHSGPPLTTTLPAWCGPVSRLLTSPQAYGEQLKEDDVECIVNQDELAMNYQEQSPSPSSPTTKLALDQKSSGQTPGKENIYEGDLGLGGYDLKLEQTRGQPQMD</sequence>
<protein>
    <recommendedName>
        <fullName>Sodium/hydrogen exchanger 9</fullName>
    </recommendedName>
    <alternativeName>
        <fullName>Na(+)/H(+) exchanger 9</fullName>
        <shortName>NHE-9</shortName>
    </alternativeName>
    <alternativeName>
        <fullName>Solute carrier family 9 member 9</fullName>
    </alternativeName>
</protein>
<keyword id="KW-0050">Antiport</keyword>
<keyword id="KW-1003">Cell membrane</keyword>
<keyword id="KW-0968">Cytoplasmic vesicle</keyword>
<keyword id="KW-0967">Endosome</keyword>
<keyword id="KW-0406">Ion transport</keyword>
<keyword id="KW-0472">Membrane</keyword>
<keyword id="KW-1185">Reference proteome</keyword>
<keyword id="KW-0915">Sodium</keyword>
<keyword id="KW-0739">Sodium transport</keyword>
<keyword id="KW-0812">Transmembrane</keyword>
<keyword id="KW-1133">Transmembrane helix</keyword>
<keyword id="KW-0813">Transport</keyword>
<reference key="1">
    <citation type="journal article" date="2005" name="Science">
        <title>The transcriptional landscape of the mammalian genome.</title>
        <authorList>
            <person name="Carninci P."/>
            <person name="Kasukawa T."/>
            <person name="Katayama S."/>
            <person name="Gough J."/>
            <person name="Frith M.C."/>
            <person name="Maeda N."/>
            <person name="Oyama R."/>
            <person name="Ravasi T."/>
            <person name="Lenhard B."/>
            <person name="Wells C."/>
            <person name="Kodzius R."/>
            <person name="Shimokawa K."/>
            <person name="Bajic V.B."/>
            <person name="Brenner S.E."/>
            <person name="Batalov S."/>
            <person name="Forrest A.R."/>
            <person name="Zavolan M."/>
            <person name="Davis M.J."/>
            <person name="Wilming L.G."/>
            <person name="Aidinis V."/>
            <person name="Allen J.E."/>
            <person name="Ambesi-Impiombato A."/>
            <person name="Apweiler R."/>
            <person name="Aturaliya R.N."/>
            <person name="Bailey T.L."/>
            <person name="Bansal M."/>
            <person name="Baxter L."/>
            <person name="Beisel K.W."/>
            <person name="Bersano T."/>
            <person name="Bono H."/>
            <person name="Chalk A.M."/>
            <person name="Chiu K.P."/>
            <person name="Choudhary V."/>
            <person name="Christoffels A."/>
            <person name="Clutterbuck D.R."/>
            <person name="Crowe M.L."/>
            <person name="Dalla E."/>
            <person name="Dalrymple B.P."/>
            <person name="de Bono B."/>
            <person name="Della Gatta G."/>
            <person name="di Bernardo D."/>
            <person name="Down T."/>
            <person name="Engstrom P."/>
            <person name="Fagiolini M."/>
            <person name="Faulkner G."/>
            <person name="Fletcher C.F."/>
            <person name="Fukushima T."/>
            <person name="Furuno M."/>
            <person name="Futaki S."/>
            <person name="Gariboldi M."/>
            <person name="Georgii-Hemming P."/>
            <person name="Gingeras T.R."/>
            <person name="Gojobori T."/>
            <person name="Green R.E."/>
            <person name="Gustincich S."/>
            <person name="Harbers M."/>
            <person name="Hayashi Y."/>
            <person name="Hensch T.K."/>
            <person name="Hirokawa N."/>
            <person name="Hill D."/>
            <person name="Huminiecki L."/>
            <person name="Iacono M."/>
            <person name="Ikeo K."/>
            <person name="Iwama A."/>
            <person name="Ishikawa T."/>
            <person name="Jakt M."/>
            <person name="Kanapin A."/>
            <person name="Katoh M."/>
            <person name="Kawasawa Y."/>
            <person name="Kelso J."/>
            <person name="Kitamura H."/>
            <person name="Kitano H."/>
            <person name="Kollias G."/>
            <person name="Krishnan S.P."/>
            <person name="Kruger A."/>
            <person name="Kummerfeld S.K."/>
            <person name="Kurochkin I.V."/>
            <person name="Lareau L.F."/>
            <person name="Lazarevic D."/>
            <person name="Lipovich L."/>
            <person name="Liu J."/>
            <person name="Liuni S."/>
            <person name="McWilliam S."/>
            <person name="Madan Babu M."/>
            <person name="Madera M."/>
            <person name="Marchionni L."/>
            <person name="Matsuda H."/>
            <person name="Matsuzawa S."/>
            <person name="Miki H."/>
            <person name="Mignone F."/>
            <person name="Miyake S."/>
            <person name="Morris K."/>
            <person name="Mottagui-Tabar S."/>
            <person name="Mulder N."/>
            <person name="Nakano N."/>
            <person name="Nakauchi H."/>
            <person name="Ng P."/>
            <person name="Nilsson R."/>
            <person name="Nishiguchi S."/>
            <person name="Nishikawa S."/>
            <person name="Nori F."/>
            <person name="Ohara O."/>
            <person name="Okazaki Y."/>
            <person name="Orlando V."/>
            <person name="Pang K.C."/>
            <person name="Pavan W.J."/>
            <person name="Pavesi G."/>
            <person name="Pesole G."/>
            <person name="Petrovsky N."/>
            <person name="Piazza S."/>
            <person name="Reed J."/>
            <person name="Reid J.F."/>
            <person name="Ring B.Z."/>
            <person name="Ringwald M."/>
            <person name="Rost B."/>
            <person name="Ruan Y."/>
            <person name="Salzberg S.L."/>
            <person name="Sandelin A."/>
            <person name="Schneider C."/>
            <person name="Schoenbach C."/>
            <person name="Sekiguchi K."/>
            <person name="Semple C.A."/>
            <person name="Seno S."/>
            <person name="Sessa L."/>
            <person name="Sheng Y."/>
            <person name="Shibata Y."/>
            <person name="Shimada H."/>
            <person name="Shimada K."/>
            <person name="Silva D."/>
            <person name="Sinclair B."/>
            <person name="Sperling S."/>
            <person name="Stupka E."/>
            <person name="Sugiura K."/>
            <person name="Sultana R."/>
            <person name="Takenaka Y."/>
            <person name="Taki K."/>
            <person name="Tammoja K."/>
            <person name="Tan S.L."/>
            <person name="Tang S."/>
            <person name="Taylor M.S."/>
            <person name="Tegner J."/>
            <person name="Teichmann S.A."/>
            <person name="Ueda H.R."/>
            <person name="van Nimwegen E."/>
            <person name="Verardo R."/>
            <person name="Wei C.L."/>
            <person name="Yagi K."/>
            <person name="Yamanishi H."/>
            <person name="Zabarovsky E."/>
            <person name="Zhu S."/>
            <person name="Zimmer A."/>
            <person name="Hide W."/>
            <person name="Bult C."/>
            <person name="Grimmond S.M."/>
            <person name="Teasdale R.D."/>
            <person name="Liu E.T."/>
            <person name="Brusic V."/>
            <person name="Quackenbush J."/>
            <person name="Wahlestedt C."/>
            <person name="Mattick J.S."/>
            <person name="Hume D.A."/>
            <person name="Kai C."/>
            <person name="Sasaki D."/>
            <person name="Tomaru Y."/>
            <person name="Fukuda S."/>
            <person name="Kanamori-Katayama M."/>
            <person name="Suzuki M."/>
            <person name="Aoki J."/>
            <person name="Arakawa T."/>
            <person name="Iida J."/>
            <person name="Imamura K."/>
            <person name="Itoh M."/>
            <person name="Kato T."/>
            <person name="Kawaji H."/>
            <person name="Kawagashira N."/>
            <person name="Kawashima T."/>
            <person name="Kojima M."/>
            <person name="Kondo S."/>
            <person name="Konno H."/>
            <person name="Nakano K."/>
            <person name="Ninomiya N."/>
            <person name="Nishio T."/>
            <person name="Okada M."/>
            <person name="Plessy C."/>
            <person name="Shibata K."/>
            <person name="Shiraki T."/>
            <person name="Suzuki S."/>
            <person name="Tagami M."/>
            <person name="Waki K."/>
            <person name="Watahiki A."/>
            <person name="Okamura-Oho Y."/>
            <person name="Suzuki H."/>
            <person name="Kawai J."/>
            <person name="Hayashizaki Y."/>
        </authorList>
    </citation>
    <scope>NUCLEOTIDE SEQUENCE [LARGE SCALE MRNA]</scope>
    <source>
        <strain>C57BL/6J</strain>
        <strain>NOD</strain>
        <tissue>Spleen</tissue>
        <tissue>Vagina</tissue>
    </source>
</reference>
<reference key="2">
    <citation type="journal article" date="2006" name="J. Neurosci.">
        <title>Vestibular hair bundles control pH with (Na+, K+)/H+ exchangers NHE6 and NHE9.</title>
        <authorList>
            <person name="Hill J.K."/>
            <person name="Brett C.L."/>
            <person name="Chyou A."/>
            <person name="Kallay L.M."/>
            <person name="Sakaguchi M."/>
            <person name="Rao R."/>
            <person name="Gillespie P.G."/>
        </authorList>
    </citation>
    <scope>SUBCELLULAR LOCATION</scope>
    <scope>FUNCTION</scope>
    <scope>TRANSPORTER ACTIVITY</scope>
</reference>
<reference key="3">
    <citation type="journal article" date="2013" name="Nat. Commun.">
        <title>Functional evaluation of autism-associated mutations in NHE9.</title>
        <authorList>
            <person name="Kondapalli K.C."/>
            <person name="Hack A."/>
            <person name="Schushan M."/>
            <person name="Landau M."/>
            <person name="Ben-Tal N."/>
            <person name="Rao R."/>
        </authorList>
    </citation>
    <scope>FUNCTION</scope>
    <scope>SUBCELLULAR LOCATION</scope>
    <scope>TISSUE SPECIFICITY</scope>
</reference>
<reference key="4">
    <citation type="journal article" date="2016" name="Am. J. Med. Genet. B Neuropsychiatr. Genet.">
        <title>Autism spectrum disorder traits in Slc9a9 knock-out mice.</title>
        <authorList>
            <person name="Yang L."/>
            <person name="Faraone S.V."/>
            <person name="Zhang-James Y."/>
        </authorList>
    </citation>
    <scope>DISRUPTION PHENOTYPE</scope>
</reference>
<reference key="5">
    <citation type="journal article" date="2018" name="Nat. Commun.">
        <title>A mouse model of autism implicates endosome pH in the regulation of presynaptic calcium entry.</title>
        <authorList>
            <person name="Ullman J.C."/>
            <person name="Yang J."/>
            <person name="Sullivan M."/>
            <person name="Bendor J."/>
            <person name="Levy J."/>
            <person name="Pham E."/>
            <person name="Silm K."/>
            <person name="Seifikar H."/>
            <person name="Sohal V.S."/>
            <person name="Nicoll R.A."/>
            <person name="Edwards R.H."/>
        </authorList>
    </citation>
    <scope>DEVELOPMENTAL STAGE</scope>
    <scope>FUNCTION</scope>
    <scope>SUBCELLULAR LOCATION</scope>
    <scope>CONDITIONAL KNOCKOUT</scope>
    <scope>MUTAGENESIS OF LEU-236</scope>
</reference>
<reference key="6">
    <citation type="journal article" date="2022" name="J. Biol. Chem.">
        <title>The sodium proton exchanger NHE9 regulates phagosome maturation and bactericidal activity in macrophages.</title>
        <authorList>
            <person name="Shamroukh H.S."/>
            <person name="Lone N."/>
            <person name="Akhtar M."/>
            <person name="Altayib A."/>
            <person name="Sutliff S."/>
            <person name="Kassem Z."/>
            <person name="Tripathy S.K."/>
            <person name="Kondapalli K.C."/>
        </authorList>
    </citation>
    <scope>INDUCTION</scope>
    <scope>FUNCTION</scope>
    <scope>TISSUE SPECIFICITY</scope>
</reference>
<dbReference type="EMBL" id="AK037058">
    <property type="protein sequence ID" value="BAC29688.1"/>
    <property type="molecule type" value="mRNA"/>
</dbReference>
<dbReference type="EMBL" id="AK156494">
    <property type="protein sequence ID" value="BAE33731.1"/>
    <property type="molecule type" value="mRNA"/>
</dbReference>
<dbReference type="CCDS" id="CCDS40726.1"/>
<dbReference type="RefSeq" id="NP_808577.3">
    <property type="nucleotide sequence ID" value="NM_177909.5"/>
</dbReference>
<dbReference type="SMR" id="Q8BZ00"/>
<dbReference type="FunCoup" id="Q8BZ00">
    <property type="interactions" value="237"/>
</dbReference>
<dbReference type="STRING" id="10090.ENSMUSP00000033463"/>
<dbReference type="iPTMnet" id="Q8BZ00"/>
<dbReference type="PhosphoSitePlus" id="Q8BZ00"/>
<dbReference type="jPOST" id="Q8BZ00"/>
<dbReference type="PaxDb" id="10090-ENSMUSP00000033463"/>
<dbReference type="ProteomicsDB" id="261376"/>
<dbReference type="Antibodypedia" id="18118">
    <property type="antibodies" value="210 antibodies from 27 providers"/>
</dbReference>
<dbReference type="DNASU" id="331004"/>
<dbReference type="Ensembl" id="ENSMUST00000033463.10">
    <property type="protein sequence ID" value="ENSMUSP00000033463.10"/>
    <property type="gene ID" value="ENSMUSG00000031129.10"/>
</dbReference>
<dbReference type="GeneID" id="331004"/>
<dbReference type="KEGG" id="mmu:331004"/>
<dbReference type="UCSC" id="uc009ray.2">
    <property type="organism name" value="mouse"/>
</dbReference>
<dbReference type="AGR" id="MGI:2679732"/>
<dbReference type="CTD" id="285195"/>
<dbReference type="MGI" id="MGI:2679732">
    <property type="gene designation" value="Slc9a9"/>
</dbReference>
<dbReference type="VEuPathDB" id="HostDB:ENSMUSG00000031129"/>
<dbReference type="eggNOG" id="KOG1965">
    <property type="taxonomic scope" value="Eukaryota"/>
</dbReference>
<dbReference type="GeneTree" id="ENSGT00940000160094"/>
<dbReference type="HOGENOM" id="CLU_005912_7_0_1"/>
<dbReference type="InParanoid" id="Q8BZ00"/>
<dbReference type="OMA" id="FVKAMIY"/>
<dbReference type="OrthoDB" id="196264at2759"/>
<dbReference type="PhylomeDB" id="Q8BZ00"/>
<dbReference type="TreeFam" id="TF318755"/>
<dbReference type="Reactome" id="R-MMU-425986">
    <property type="pathway name" value="Sodium/Proton exchangers"/>
</dbReference>
<dbReference type="BioGRID-ORCS" id="331004">
    <property type="hits" value="2 hits in 77 CRISPR screens"/>
</dbReference>
<dbReference type="ChiTaRS" id="Slc9a9">
    <property type="organism name" value="mouse"/>
</dbReference>
<dbReference type="PRO" id="PR:Q8BZ00"/>
<dbReference type="Proteomes" id="UP000000589">
    <property type="component" value="Chromosome 9"/>
</dbReference>
<dbReference type="RNAct" id="Q8BZ00">
    <property type="molecule type" value="protein"/>
</dbReference>
<dbReference type="Bgee" id="ENSMUSG00000031129">
    <property type="expression patterns" value="Expressed in lumbar dorsal root ganglion and 189 other cell types or tissues"/>
</dbReference>
<dbReference type="GO" id="GO:0031901">
    <property type="term" value="C:early endosome membrane"/>
    <property type="evidence" value="ECO:0007669"/>
    <property type="project" value="UniProtKB-SubCell"/>
</dbReference>
<dbReference type="GO" id="GO:0032009">
    <property type="term" value="C:early phagosome"/>
    <property type="evidence" value="ECO:0000314"/>
    <property type="project" value="UniProtKB"/>
</dbReference>
<dbReference type="GO" id="GO:0031902">
    <property type="term" value="C:late endosome membrane"/>
    <property type="evidence" value="ECO:0007669"/>
    <property type="project" value="UniProtKB-SubCell"/>
</dbReference>
<dbReference type="GO" id="GO:0030670">
    <property type="term" value="C:phagocytic vesicle membrane"/>
    <property type="evidence" value="ECO:0000314"/>
    <property type="project" value="UniProtKB"/>
</dbReference>
<dbReference type="GO" id="GO:0005886">
    <property type="term" value="C:plasma membrane"/>
    <property type="evidence" value="ECO:0000314"/>
    <property type="project" value="UniProtKB"/>
</dbReference>
<dbReference type="GO" id="GO:0055038">
    <property type="term" value="C:recycling endosome membrane"/>
    <property type="evidence" value="ECO:0007669"/>
    <property type="project" value="UniProtKB-SubCell"/>
</dbReference>
<dbReference type="GO" id="GO:0015386">
    <property type="term" value="F:potassium:proton antiporter activity"/>
    <property type="evidence" value="ECO:0000314"/>
    <property type="project" value="UniProtKB"/>
</dbReference>
<dbReference type="GO" id="GO:0015385">
    <property type="term" value="F:sodium:proton antiporter activity"/>
    <property type="evidence" value="ECO:0000314"/>
    <property type="project" value="UniProtKB"/>
</dbReference>
<dbReference type="GO" id="GO:0042742">
    <property type="term" value="P:defense response to bacterium"/>
    <property type="evidence" value="ECO:0000314"/>
    <property type="project" value="UniProtKB"/>
</dbReference>
<dbReference type="GO" id="GO:0090382">
    <property type="term" value="P:phagosome maturation"/>
    <property type="evidence" value="ECO:0000314"/>
    <property type="project" value="UniProtKB"/>
</dbReference>
<dbReference type="GO" id="GO:0071805">
    <property type="term" value="P:potassium ion transmembrane transport"/>
    <property type="evidence" value="ECO:0000314"/>
    <property type="project" value="UniProtKB"/>
</dbReference>
<dbReference type="GO" id="GO:0051453">
    <property type="term" value="P:regulation of intracellular pH"/>
    <property type="evidence" value="ECO:0000314"/>
    <property type="project" value="UniProtKB"/>
</dbReference>
<dbReference type="GO" id="GO:0035725">
    <property type="term" value="P:sodium ion transmembrane transport"/>
    <property type="evidence" value="ECO:0000314"/>
    <property type="project" value="UniProtKB"/>
</dbReference>
<dbReference type="Gene3D" id="6.10.140.1330">
    <property type="match status" value="1"/>
</dbReference>
<dbReference type="InterPro" id="IPR018422">
    <property type="entry name" value="Cation/H_exchanger_CPA1"/>
</dbReference>
<dbReference type="InterPro" id="IPR006153">
    <property type="entry name" value="Cation/H_exchanger_TM"/>
</dbReference>
<dbReference type="InterPro" id="IPR004709">
    <property type="entry name" value="NaH_exchanger"/>
</dbReference>
<dbReference type="InterPro" id="IPR002090">
    <property type="entry name" value="NHE-6/7/9"/>
</dbReference>
<dbReference type="NCBIfam" id="TIGR00840">
    <property type="entry name" value="b_cpa1"/>
    <property type="match status" value="1"/>
</dbReference>
<dbReference type="PANTHER" id="PTHR10110">
    <property type="entry name" value="SODIUM/HYDROGEN EXCHANGER"/>
    <property type="match status" value="1"/>
</dbReference>
<dbReference type="PANTHER" id="PTHR10110:SF61">
    <property type="entry name" value="SODIUM_HYDROGEN EXCHANGER 9"/>
    <property type="match status" value="1"/>
</dbReference>
<dbReference type="Pfam" id="PF00999">
    <property type="entry name" value="Na_H_Exchanger"/>
    <property type="match status" value="1"/>
</dbReference>
<dbReference type="PRINTS" id="PR01084">
    <property type="entry name" value="NAHEXCHNGR"/>
</dbReference>
<dbReference type="PRINTS" id="PR01088">
    <property type="entry name" value="NAHEXCHNGR6"/>
</dbReference>
<feature type="chain" id="PRO_0000052368" description="Sodium/hydrogen exchanger 9">
    <location>
        <begin position="1"/>
        <end position="644"/>
    </location>
</feature>
<feature type="topological domain" description="Lumenal" evidence="2">
    <location>
        <begin position="1"/>
        <end position="20"/>
    </location>
</feature>
<feature type="transmembrane region" description="Helical; Name=1" evidence="4">
    <location>
        <begin position="21"/>
        <end position="41"/>
    </location>
</feature>
<feature type="topological domain" description="Cytoplasmic" evidence="2">
    <location>
        <begin position="42"/>
        <end position="45"/>
    </location>
</feature>
<feature type="transmembrane region" description="Helical; Name=2" evidence="4">
    <location>
        <begin position="46"/>
        <end position="66"/>
    </location>
</feature>
<feature type="topological domain" description="Lumenal" evidence="2">
    <location>
        <begin position="67"/>
        <end position="126"/>
    </location>
</feature>
<feature type="transmembrane region" description="Helical; Name=3" evidence="4">
    <location>
        <begin position="127"/>
        <end position="147"/>
    </location>
</feature>
<feature type="topological domain" description="Cytoplasmic" evidence="2">
    <location>
        <begin position="148"/>
        <end position="164"/>
    </location>
</feature>
<feature type="transmembrane region" description="Helical; Name=4" evidence="4">
    <location>
        <begin position="165"/>
        <end position="185"/>
    </location>
</feature>
<feature type="topological domain" description="Lumenal" evidence="2">
    <location>
        <begin position="186"/>
        <end position="203"/>
    </location>
</feature>
<feature type="transmembrane region" description="Helical; Name=5" evidence="4">
    <location>
        <begin position="204"/>
        <end position="224"/>
    </location>
</feature>
<feature type="topological domain" description="Cytoplasmic" evidence="2">
    <location>
        <begin position="225"/>
        <end position="235"/>
    </location>
</feature>
<feature type="transmembrane region" description="Helical; Name=6" evidence="4">
    <location>
        <begin position="236"/>
        <end position="256"/>
    </location>
</feature>
<feature type="topological domain" description="Lumenal" evidence="2">
    <location>
        <begin position="257"/>
        <end position="277"/>
    </location>
</feature>
<feature type="transmembrane region" description="Helical; Name=7" evidence="4">
    <location>
        <begin position="278"/>
        <end position="298"/>
    </location>
</feature>
<feature type="topological domain" description="Cytoplasmic" evidence="2">
    <location>
        <begin position="299"/>
        <end position="309"/>
    </location>
</feature>
<feature type="transmembrane region" description="Helical; Name=8" evidence="4">
    <location>
        <begin position="310"/>
        <end position="327"/>
    </location>
</feature>
<feature type="topological domain" description="Lumenal" evidence="2">
    <location>
        <begin position="328"/>
        <end position="333"/>
    </location>
</feature>
<feature type="transmembrane region" description="Helical; Name=9" evidence="4">
    <location>
        <begin position="334"/>
        <end position="350"/>
    </location>
</feature>
<feature type="topological domain" description="Cytoplasmic" evidence="2">
    <location>
        <begin position="351"/>
        <end position="364"/>
    </location>
</feature>
<feature type="transmembrane region" description="Helical; Name=10" evidence="4">
    <location>
        <begin position="365"/>
        <end position="385"/>
    </location>
</feature>
<feature type="topological domain" description="Lumenal" evidence="2">
    <location>
        <position position="386"/>
    </location>
</feature>
<feature type="transmembrane region" description="Helical; Name=11" evidence="4">
    <location>
        <begin position="387"/>
        <end position="407"/>
    </location>
</feature>
<feature type="topological domain" description="Cytoplasmic" evidence="2">
    <location>
        <begin position="408"/>
        <end position="429"/>
    </location>
</feature>
<feature type="transmembrane region" description="Helical; Name=12" evidence="4">
    <location>
        <begin position="430"/>
        <end position="450"/>
    </location>
</feature>
<feature type="topological domain" description="Lumenal" evidence="2">
    <location>
        <begin position="451"/>
        <end position="465"/>
    </location>
</feature>
<feature type="transmembrane region" description="Helical; Name=13" evidence="4">
    <location>
        <begin position="466"/>
        <end position="486"/>
    </location>
</feature>
<feature type="topological domain" description="Cytoplasmic" evidence="3">
    <location>
        <begin position="487"/>
        <end position="644"/>
    </location>
</feature>
<feature type="region of interest" description="Disordered" evidence="5">
    <location>
        <begin position="590"/>
        <end position="644"/>
    </location>
</feature>
<feature type="mutagenesis site" description="Does not rescue the hyperacidication of axonal vesicles as well as Ca2(+) influx in response to single action potential in neurons from Slc9a9-deficient mice." evidence="9">
    <original>L</original>
    <variation>S</variation>
    <location>
        <position position="236"/>
    </location>
</feature>
<gene>
    <name type="primary">Slc9a9</name>
    <name type="synonym">Nhe9</name>
</gene>
<evidence type="ECO:0000250" key="1">
    <source>
        <dbReference type="UniProtKB" id="D4A7H1"/>
    </source>
</evidence>
<evidence type="ECO:0000250" key="2">
    <source>
        <dbReference type="UniProtKB" id="F7B113"/>
    </source>
</evidence>
<evidence type="ECO:0000250" key="3">
    <source>
        <dbReference type="UniProtKB" id="Q8IVB4"/>
    </source>
</evidence>
<evidence type="ECO:0000255" key="4"/>
<evidence type="ECO:0000256" key="5">
    <source>
        <dbReference type="SAM" id="MobiDB-lite"/>
    </source>
</evidence>
<evidence type="ECO:0000269" key="6">
    <source>
    </source>
</evidence>
<evidence type="ECO:0000269" key="7">
    <source>
    </source>
</evidence>
<evidence type="ECO:0000269" key="8">
    <source>
    </source>
</evidence>
<evidence type="ECO:0000269" key="9">
    <source>
    </source>
</evidence>
<evidence type="ECO:0000269" key="10">
    <source>
    </source>
</evidence>
<evidence type="ECO:0000305" key="11"/>
<comment type="function">
    <text evidence="3 6 7 9 10">Endosomal Na(+), K(+)/H(+) antiporter. Mediates the electroneutral exchange of endosomal luminal H(+) for a cytosolic Na(+) or K(+) (PubMed:17005858). By facilitating proton efflux, SLC9A9 counteracts the acidity generated by vacuolar (V)-ATPase, thereby limiting luminal acidification. Regulates organellar pH and consequently, endosome maturation and endocytic trafficking of plasma membrane receptors and neurotransporters (PubMed:24065030, PubMed:29362376). Promotes the recycling of transferrin receptors back to the cell surface to facilitate additional iron uptake in the brain (By similarity). Regulates synaptic transmission by regulating the luminal pH of axonal endosomes (PubMed:29362376). Regulates phagosome lumenal pH, thus affecting phagosome maturation, and consequently, microbicidal activity in macrophages (PubMed:35716776). Can also be active at the cell surface of specialized cells, e.g., in the inner ear hair bundles uses the high K(+) of the endolymph to regulate intracelular pH (PubMed:17005858).</text>
</comment>
<comment type="catalytic activity">
    <reaction evidence="6">
        <text>Na(+)(in) + H(+)(out) = Na(+)(out) + H(+)(in)</text>
        <dbReference type="Rhea" id="RHEA:29419"/>
        <dbReference type="ChEBI" id="CHEBI:15378"/>
        <dbReference type="ChEBI" id="CHEBI:29101"/>
    </reaction>
</comment>
<comment type="catalytic activity">
    <reaction evidence="6">
        <text>K(+)(in) + H(+)(out) = K(+)(out) + H(+)(in)</text>
        <dbReference type="Rhea" id="RHEA:29467"/>
        <dbReference type="ChEBI" id="CHEBI:15378"/>
        <dbReference type="ChEBI" id="CHEBI:29103"/>
    </reaction>
</comment>
<comment type="subunit">
    <text evidence="1 2 3">Homodimer; phosphatidylinositol-4,5-bisphosphate (PIP2) and phosphatidylinositol 3,4,5-trisphosphate (PIP3) could be involved in the dimer stabilization (By similarity). Interacts (via the C-terminus) with RACK1 (By similarity). Interacts with CHP1 (By similarity).</text>
</comment>
<comment type="subcellular location">
    <subcellularLocation>
        <location evidence="3">Late endosome membrane</location>
        <topology evidence="2">Multi-pass membrane protein</topology>
    </subcellularLocation>
    <subcellularLocation>
        <location evidence="6">Cell membrane</location>
        <topology evidence="2">Multi-pass membrane protein</topology>
    </subcellularLocation>
    <subcellularLocation>
        <location evidence="7 9">Early endosome membrane</location>
        <topology evidence="2">Multi-pass membrane protein</topology>
    </subcellularLocation>
    <subcellularLocation>
        <location evidence="7 9">Recycling endosome membrane</location>
        <topology evidence="2">Multi-pass membrane protein</topology>
    </subcellularLocation>
    <subcellularLocation>
        <location>Cytoplasmic vesicle</location>
        <location>Phagosome membrane</location>
        <topology evidence="2">Multi-pass membrane protein</topology>
    </subcellularLocation>
    <text evidence="1 6">Localized to the plasma membrane in inner ear hair cell bundle (PubMed:17005858). Interacts with CHP1 (By similarity).</text>
</comment>
<comment type="tissue specificity">
    <text evidence="7 10">Expressed in the brain (PubMed:24065030). Highly expressed in immune cells, specifically macrophages (PubMed:35716776).</text>
</comment>
<comment type="developmental stage">
    <text evidence="9">Expression is relatively low during development and begins to increase only postnatally, peaking at around postnatal day 50 and declining thereafter.</text>
</comment>
<comment type="induction">
    <text evidence="10">Down-regulated upon bacterial infection in macrophages.</text>
</comment>
<comment type="disruption phenotype">
    <text evidence="8 9">Deficient mice do not show obvious changes in gross hippocampal morphology or impairments in locomotion, anxiety, smell, or pain sensitivity, however they display autism-like traits, such as reduced ultrasonic vocalization (number of calls and duration), decreased preference for social novelty, and display an increased time self-grooming (PubMed:26755066). Nervous system-specific conditional knockout mice show abnormal social and olfactive behavior, abnormal CNS synaptic transmission, impaired synaptic vesicle exocytosis, impaired presynaptic calcium entry, and decreased synaptic vesicle pH (PubMed:29362376).</text>
</comment>
<comment type="similarity">
    <text evidence="11">Belongs to the monovalent cation:proton antiporter 1 (CPA1) transporter (TC 2.A.36) family.</text>
</comment>
<name>SL9A9_MOUSE</name>
<proteinExistence type="evidence at protein level"/>